<dbReference type="EMBL" id="AF399827">
    <property type="protein sequence ID" value="AAL35772.1"/>
    <property type="molecule type" value="mRNA"/>
</dbReference>
<dbReference type="EMBL" id="AF399828">
    <property type="protein sequence ID" value="AAL35773.1"/>
    <property type="molecule type" value="mRNA"/>
</dbReference>
<dbReference type="EMBL" id="BC025096">
    <property type="protein sequence ID" value="AAH25096.1"/>
    <property type="molecule type" value="mRNA"/>
</dbReference>
<dbReference type="CCDS" id="CCDS24582.1"/>
<dbReference type="RefSeq" id="NP_001154827.1">
    <property type="nucleotide sequence ID" value="NM_001161355.1"/>
</dbReference>
<dbReference type="RefSeq" id="NP_001154828.1">
    <property type="nucleotide sequence ID" value="NM_001161356.1"/>
</dbReference>
<dbReference type="RefSeq" id="NP_599010.4">
    <property type="nucleotide sequence ID" value="NM_134249.5"/>
</dbReference>
<dbReference type="PDB" id="2OR7">
    <property type="method" value="X-ray"/>
    <property type="resolution" value="1.50 A"/>
    <property type="chains" value="A/B=20-129"/>
</dbReference>
<dbReference type="PDBsum" id="2OR7"/>
<dbReference type="SMR" id="Q8R183"/>
<dbReference type="FunCoup" id="Q8R183">
    <property type="interactions" value="515"/>
</dbReference>
<dbReference type="STRING" id="10090.ENSMUSP00000131540"/>
<dbReference type="GlyCosmos" id="Q8R183">
    <property type="glycosylation" value="2 sites, No reported glycans"/>
</dbReference>
<dbReference type="GlyGen" id="Q8R183">
    <property type="glycosylation" value="3 sites"/>
</dbReference>
<dbReference type="iPTMnet" id="Q8R183"/>
<dbReference type="PhosphoSitePlus" id="Q8R183"/>
<dbReference type="PaxDb" id="10090-ENSMUSP00000104848"/>
<dbReference type="ProteomicsDB" id="259393"/>
<dbReference type="ABCD" id="Q8R183">
    <property type="antibodies" value="1 sequenced antibody"/>
</dbReference>
<dbReference type="DNASU" id="171284"/>
<dbReference type="GeneID" id="171284"/>
<dbReference type="KEGG" id="mmu:171284"/>
<dbReference type="AGR" id="MGI:2159681"/>
<dbReference type="CTD" id="171284"/>
<dbReference type="MGI" id="MGI:2159681">
    <property type="gene designation" value="Timd2"/>
</dbReference>
<dbReference type="eggNOG" id="ENOG502S454">
    <property type="taxonomic scope" value="Eukaryota"/>
</dbReference>
<dbReference type="InParanoid" id="Q8R183"/>
<dbReference type="OrthoDB" id="8447307at2759"/>
<dbReference type="PhylomeDB" id="Q8R183"/>
<dbReference type="BioGRID-ORCS" id="171284">
    <property type="hits" value="3 hits in 76 CRISPR screens"/>
</dbReference>
<dbReference type="ChiTaRS" id="Timd2">
    <property type="organism name" value="mouse"/>
</dbReference>
<dbReference type="EvolutionaryTrace" id="Q8R183"/>
<dbReference type="PRO" id="PR:Q8R183"/>
<dbReference type="Proteomes" id="UP000000589">
    <property type="component" value="Unplaced"/>
</dbReference>
<dbReference type="RNAct" id="Q8R183">
    <property type="molecule type" value="protein"/>
</dbReference>
<dbReference type="GO" id="GO:0009986">
    <property type="term" value="C:cell surface"/>
    <property type="evidence" value="ECO:0000314"/>
    <property type="project" value="MGI"/>
</dbReference>
<dbReference type="GO" id="GO:0005886">
    <property type="term" value="C:plasma membrane"/>
    <property type="evidence" value="ECO:0007669"/>
    <property type="project" value="UniProtKB-SubCell"/>
</dbReference>
<dbReference type="GO" id="GO:0070287">
    <property type="term" value="F:ferritin receptor activity"/>
    <property type="evidence" value="ECO:0000314"/>
    <property type="project" value="MGI"/>
</dbReference>
<dbReference type="GO" id="GO:0006826">
    <property type="term" value="P:iron ion transport"/>
    <property type="evidence" value="ECO:0000314"/>
    <property type="project" value="MGI"/>
</dbReference>
<dbReference type="CDD" id="cd20982">
    <property type="entry name" value="IgV_TIM-3_like"/>
    <property type="match status" value="1"/>
</dbReference>
<dbReference type="FunFam" id="2.60.40.10:FF:000774">
    <property type="entry name" value="Hepatitis A virus cellular receptor 1"/>
    <property type="match status" value="1"/>
</dbReference>
<dbReference type="Gene3D" id="2.60.40.10">
    <property type="entry name" value="Immunoglobulins"/>
    <property type="match status" value="1"/>
</dbReference>
<dbReference type="InterPro" id="IPR007110">
    <property type="entry name" value="Ig-like_dom"/>
</dbReference>
<dbReference type="InterPro" id="IPR036179">
    <property type="entry name" value="Ig-like_dom_sf"/>
</dbReference>
<dbReference type="InterPro" id="IPR013783">
    <property type="entry name" value="Ig-like_fold"/>
</dbReference>
<dbReference type="InterPro" id="IPR003599">
    <property type="entry name" value="Ig_sub"/>
</dbReference>
<dbReference type="InterPro" id="IPR013106">
    <property type="entry name" value="Ig_V-set"/>
</dbReference>
<dbReference type="InterPro" id="IPR052331">
    <property type="entry name" value="TIM_domain-containing_protein"/>
</dbReference>
<dbReference type="PANTHER" id="PTHR47009:SF1">
    <property type="entry name" value="HEPATITIS A VIRUS CELLULAR RECEPTOR 1"/>
    <property type="match status" value="1"/>
</dbReference>
<dbReference type="PANTHER" id="PTHR47009">
    <property type="entry name" value="HEPATITIS A VIRUS CELLULAR RECEPTOR 1 HOMOLOG"/>
    <property type="match status" value="1"/>
</dbReference>
<dbReference type="Pfam" id="PF07686">
    <property type="entry name" value="V-set"/>
    <property type="match status" value="1"/>
</dbReference>
<dbReference type="SMART" id="SM00409">
    <property type="entry name" value="IG"/>
    <property type="match status" value="1"/>
</dbReference>
<dbReference type="SUPFAM" id="SSF48726">
    <property type="entry name" value="Immunoglobulin"/>
    <property type="match status" value="1"/>
</dbReference>
<dbReference type="PROSITE" id="PS50835">
    <property type="entry name" value="IG_LIKE"/>
    <property type="match status" value="1"/>
</dbReference>
<comment type="function">
    <text evidence="4 5 6 8 9">Cell surface glycoprotein that participates in iron homeostasis in the liver, the kidney, the retina and oligodendrocytes by acting as a receptor of H-ferritin (PubMed:16203866, PubMed:33065090). Mechanistically, mediates iron-containing ferritin uptake via an endocytic pathway, trafficking to endosomes and subsequently to lysosomes (PubMed:16043519, PubMed:21886823). Plays also an important role in the regulation of Th2 immunity (PubMed:16043519). Receptor for SEMA4A involved in the regulation of T-cell function, enhancing T-cell activation (PubMed:12374982).</text>
</comment>
<comment type="subunit">
    <text evidence="7">Homodimer.</text>
</comment>
<comment type="subcellular location">
    <subcellularLocation>
        <location evidence="7 8">Cell membrane</location>
        <topology evidence="7">Single-pass type I membrane protein</topology>
    </subcellularLocation>
</comment>
<comment type="tissue specificity">
    <text evidence="5 6 9">Expressed on late differentiated Th2 cells (PubMed:16043519). Expressed also on all splenic B-cells, with increased levels on germinal center B-cells, in the liver, especially in bile duct epithelial cells, and in renal tubule cells (PubMed:16203866). Within retina, mainly expressed in Mueller cells (PubMed:33065090).</text>
</comment>
<comment type="disruption phenotype">
    <text evidence="9">Deletion mutants lead to ferritin accumulation and iron overload in the retina leading to retinal lesions.</text>
</comment>
<comment type="miscellaneous">
    <text>Belongs to the T-cell and airway phenotype regulator (Tapr) locus, a single chromosomal region that confers reduced T-helper type 2 responsiveness and protects against airway hyperactivity (AHR), the hallmark of human asthma. The human genomic locus appears to lack the Timd2 gene.</text>
</comment>
<comment type="similarity">
    <text evidence="10">Belongs to the immunoglobulin superfamily. TIM family.</text>
</comment>
<protein>
    <recommendedName>
        <fullName>T-cell immunoglobulin and mucin domain-containing protein 2</fullName>
        <shortName>TIMD-2</shortName>
    </recommendedName>
    <alternativeName>
        <fullName>T-cell immunoglobulin mucin receptor 2</fullName>
        <shortName>TIM-2</shortName>
    </alternativeName>
    <alternativeName>
        <fullName>T-cell membrane protein 2</fullName>
    </alternativeName>
</protein>
<organism>
    <name type="scientific">Mus musculus</name>
    <name type="common">Mouse</name>
    <dbReference type="NCBI Taxonomy" id="10090"/>
    <lineage>
        <taxon>Eukaryota</taxon>
        <taxon>Metazoa</taxon>
        <taxon>Chordata</taxon>
        <taxon>Craniata</taxon>
        <taxon>Vertebrata</taxon>
        <taxon>Euteleostomi</taxon>
        <taxon>Mammalia</taxon>
        <taxon>Eutheria</taxon>
        <taxon>Euarchontoglires</taxon>
        <taxon>Glires</taxon>
        <taxon>Rodentia</taxon>
        <taxon>Myomorpha</taxon>
        <taxon>Muroidea</taxon>
        <taxon>Muridae</taxon>
        <taxon>Murinae</taxon>
        <taxon>Mus</taxon>
        <taxon>Mus</taxon>
    </lineage>
</organism>
<name>TIMD2_MOUSE</name>
<gene>
    <name type="primary">Timd2</name>
    <name type="synonym">Tim2</name>
</gene>
<feature type="signal peptide" evidence="1">
    <location>
        <begin position="1"/>
        <end position="21"/>
    </location>
</feature>
<feature type="chain" id="PRO_0000042099" description="T-cell immunoglobulin and mucin domain-containing protein 2">
    <location>
        <begin position="22"/>
        <end position="305"/>
    </location>
</feature>
<feature type="topological domain" description="Extracellular" evidence="1">
    <location>
        <begin position="22"/>
        <end position="231"/>
    </location>
</feature>
<feature type="transmembrane region" description="Helical" evidence="1">
    <location>
        <begin position="232"/>
        <end position="252"/>
    </location>
</feature>
<feature type="topological domain" description="Cytoplasmic" evidence="1">
    <location>
        <begin position="253"/>
        <end position="305"/>
    </location>
</feature>
<feature type="domain" description="Ig-like V-type">
    <location>
        <begin position="22"/>
        <end position="125"/>
    </location>
</feature>
<feature type="region of interest" description="Disordered" evidence="3">
    <location>
        <begin position="130"/>
        <end position="174"/>
    </location>
</feature>
<feature type="compositionally biased region" description="Low complexity" evidence="3">
    <location>
        <begin position="131"/>
        <end position="167"/>
    </location>
</feature>
<feature type="glycosylation site" description="N-linked (GlcNAc...) asparagine" evidence="1">
    <location>
        <position position="86"/>
    </location>
</feature>
<feature type="glycosylation site" description="N-linked (GlcNAc...) asparagine" evidence="1">
    <location>
        <position position="91"/>
    </location>
</feature>
<feature type="disulfide bond" evidence="2 7">
    <location>
        <begin position="37"/>
        <end position="109"/>
    </location>
</feature>
<feature type="disulfide bond" evidence="2 7">
    <location>
        <begin position="50"/>
        <end position="61"/>
    </location>
</feature>
<feature type="disulfide bond" evidence="2 7">
    <location>
        <begin position="56"/>
        <end position="108"/>
    </location>
</feature>
<feature type="sequence conflict" description="In Ref. 1; AAL35772/AAL35773." evidence="10" ref="1">
    <original>L</original>
    <variation>R</variation>
    <location>
        <position position="80"/>
    </location>
</feature>
<feature type="sequence conflict" description="In Ref. 1; AAL35772/AAL35773." evidence="10" ref="1">
    <original>D</original>
    <variation>S</variation>
    <location>
        <position position="196"/>
    </location>
</feature>
<feature type="strand" evidence="11">
    <location>
        <begin position="25"/>
        <end position="28"/>
    </location>
</feature>
<feature type="strand" evidence="11">
    <location>
        <begin position="33"/>
        <end position="35"/>
    </location>
</feature>
<feature type="helix" evidence="11">
    <location>
        <begin position="41"/>
        <end position="44"/>
    </location>
</feature>
<feature type="strand" evidence="11">
    <location>
        <begin position="49"/>
        <end position="54"/>
    </location>
</feature>
<feature type="helix" evidence="11">
    <location>
        <begin position="56"/>
        <end position="59"/>
    </location>
</feature>
<feature type="turn" evidence="11">
    <location>
        <begin position="60"/>
        <end position="63"/>
    </location>
</feature>
<feature type="strand" evidence="11">
    <location>
        <begin position="64"/>
        <end position="68"/>
    </location>
</feature>
<feature type="strand" evidence="11">
    <location>
        <begin position="70"/>
        <end position="78"/>
    </location>
</feature>
<feature type="helix" evidence="11">
    <location>
        <begin position="87"/>
        <end position="89"/>
    </location>
</feature>
<feature type="strand" evidence="11">
    <location>
        <begin position="94"/>
        <end position="98"/>
    </location>
</feature>
<feature type="helix" evidence="11">
    <location>
        <begin position="101"/>
        <end position="103"/>
    </location>
</feature>
<feature type="strand" evidence="11">
    <location>
        <begin position="105"/>
        <end position="111"/>
    </location>
</feature>
<feature type="strand" evidence="11">
    <location>
        <begin position="118"/>
        <end position="128"/>
    </location>
</feature>
<proteinExistence type="evidence at protein level"/>
<reference key="1">
    <citation type="journal article" date="2001" name="Nat. Immunol.">
        <title>Identification of Tapr (an airway hyperreactivity regulatory locus) and the linked Tim gene family.</title>
        <authorList>
            <person name="McIntire J.J."/>
            <person name="Umetsu S.E."/>
            <person name="Akbari O."/>
            <person name="Potter M."/>
            <person name="Kuchroo V.K."/>
            <person name="Barsh G.S."/>
            <person name="Freeman G.J."/>
            <person name="Umetsu D.T."/>
            <person name="DeKruyff R.H."/>
        </authorList>
    </citation>
    <scope>NUCLEOTIDE SEQUENCE [MRNA]</scope>
    <source>
        <strain>BALB/cJ</strain>
        <strain>DBA/2J</strain>
        <tissue>Spleen</tissue>
    </source>
</reference>
<reference key="2">
    <citation type="journal article" date="2004" name="Genome Res.">
        <title>The status, quality, and expansion of the NIH full-length cDNA project: the Mammalian Gene Collection (MGC).</title>
        <authorList>
            <consortium name="The MGC Project Team"/>
        </authorList>
    </citation>
    <scope>NUCLEOTIDE SEQUENCE [LARGE SCALE MRNA]</scope>
    <source>
        <strain>FVB/N</strain>
        <tissue>Liver</tissue>
    </source>
</reference>
<reference key="3">
    <citation type="journal article" date="2002" name="Nature">
        <title>Class IV semaphorin Sema4A enhances T-cell activation and interacts with Tim-2.</title>
        <authorList>
            <person name="Kumanogoh A."/>
            <person name="Marukawa S."/>
            <person name="Suzuki K."/>
            <person name="Takegahara N."/>
            <person name="Watanabe C."/>
            <person name="Ch'ng E."/>
            <person name="Ishida I."/>
            <person name="Fujimura H."/>
            <person name="Sakoda S."/>
            <person name="Yoshida K."/>
            <person name="Kikutani H."/>
        </authorList>
    </citation>
    <scope>FUNCTION AS A RECEPTOR FOR SEMA4A</scope>
</reference>
<reference key="4">
    <citation type="journal article" date="2005" name="J. Exp. Med.">
        <title>Tim-2 regulates T helper type 2 responses and autoimmunity.</title>
        <authorList>
            <person name="Chakravarti S."/>
            <person name="Sabatos C.A."/>
            <person name="Xiao S."/>
            <person name="Illes Z."/>
            <person name="Cha E.K."/>
            <person name="Sobel R.A."/>
            <person name="Zheng X.X."/>
            <person name="Strom T.B."/>
            <person name="Kuchroo V.K."/>
        </authorList>
    </citation>
    <scope>FUNCTION</scope>
    <scope>TISSUE SPECIFICITY</scope>
</reference>
<reference key="5">
    <citation type="journal article" date="2005" name="J. Exp. Med.">
        <title>TIM-2 is expressed on B cells and in liver and kidney and is a receptor for H-ferritin endocytosis.</title>
        <authorList>
            <person name="Chen T.T."/>
            <person name="Li L."/>
            <person name="Chung D.H."/>
            <person name="Allen C.D."/>
            <person name="Torti S.V."/>
            <person name="Torti F.M."/>
            <person name="Cyster J.G."/>
            <person name="Chen C.Y."/>
            <person name="Brodsky F.M."/>
            <person name="Niemi E.C."/>
            <person name="Nakamura M.C."/>
            <person name="Seaman W.E."/>
            <person name="Daws M.R."/>
        </authorList>
    </citation>
    <scope>FUNCTION</scope>
    <scope>TISSUE SPECIFICITY</scope>
</reference>
<reference key="6">
    <citation type="journal article" date="2011" name="PLoS ONE">
        <title>Iron uptake mediated by binding of H-ferritin to the TIM-2 receptor in mouse cells.</title>
        <authorList>
            <person name="Han J."/>
            <person name="Seaman W.E."/>
            <person name="Di X."/>
            <person name="Wang W."/>
            <person name="Willingham M."/>
            <person name="Torti F.M."/>
            <person name="Torti S.V."/>
        </authorList>
    </citation>
    <scope>FUNCTION</scope>
    <scope>SUBCELLULAR LOCATION</scope>
</reference>
<reference key="7">
    <citation type="journal article" date="2021" name="Exp. Eye Res.">
        <title>TIM2 modulates retinal iron levels and is involved in blood-retinal barrier breakdown.</title>
        <authorList>
            <person name="Valenca A."/>
            <person name="Mendes-Jorge L."/>
            <person name="Bonet A."/>
            <person name="Catita J."/>
            <person name="Ramos D."/>
            <person name="Jose-Cunilleras E."/>
            <person name="Garcia M."/>
            <person name="Carretero A."/>
            <person name="Nacher V."/>
            <person name="Navarro M."/>
            <person name="Ruberte J."/>
        </authorList>
    </citation>
    <scope>FUNCTION</scope>
    <scope>TISSUE SPECIFICITY</scope>
    <scope>DISRUPTION PHENOTYPE</scope>
</reference>
<reference key="8">
    <citation type="journal article" date="2007" name="Immunity">
        <title>Structures of T Cell immunoglobulin mucin receptors 1 and 2 reveal mechanisms for regulation of immune responses by the TIM receptor family.</title>
        <authorList>
            <person name="Santiago C."/>
            <person name="Ballesteros A."/>
            <person name="Tami C."/>
            <person name="Martinez-Munoz L."/>
            <person name="Kaplan G.G."/>
            <person name="Casasnovas J.M."/>
        </authorList>
    </citation>
    <scope>X-RAY CRYSTALLOGRAPHY (1.5 ANGSTROMS) OF 19-130</scope>
    <scope>SUBUNIT</scope>
    <scope>DISULFIDE BONDS</scope>
    <scope>SUBCELLULAR LOCATION</scope>
</reference>
<sequence>MNQIQVFISGLILLLPGAVESHTAVQGLAGHPVTLPCIYSTHLGGIVPMCWGLGECRHSYCIRSLIWTNGYTVTHQRNSLYQLKGNISEGNVSLTIENTVVGDGGPYCCVVEIPGAFHFVDYMLEVKPEISTSPPTRPTATGRPTTISTRSTHVPTSTRVSTSTSPTPAHTETYKPEATTFYPDQTTAEVTETLPDTPADWHNTVTSSDDPWDDNTEVIPPQKPQKNLNKGFYVGISIAALLILMLLSTMVITRYVVMKRKSESLSFVAFPISKIGASPKKVVERTRCEDQVYIIEDTPYPEEES</sequence>
<keyword id="KW-0002">3D-structure</keyword>
<keyword id="KW-1003">Cell membrane</keyword>
<keyword id="KW-1015">Disulfide bond</keyword>
<keyword id="KW-0325">Glycoprotein</keyword>
<keyword id="KW-0393">Immunoglobulin domain</keyword>
<keyword id="KW-0472">Membrane</keyword>
<keyword id="KW-0675">Receptor</keyword>
<keyword id="KW-1185">Reference proteome</keyword>
<keyword id="KW-0732">Signal</keyword>
<keyword id="KW-0812">Transmembrane</keyword>
<keyword id="KW-1133">Transmembrane helix</keyword>
<evidence type="ECO:0000255" key="1"/>
<evidence type="ECO:0000255" key="2">
    <source>
        <dbReference type="PROSITE-ProRule" id="PRU00114"/>
    </source>
</evidence>
<evidence type="ECO:0000256" key="3">
    <source>
        <dbReference type="SAM" id="MobiDB-lite"/>
    </source>
</evidence>
<evidence type="ECO:0000269" key="4">
    <source>
    </source>
</evidence>
<evidence type="ECO:0000269" key="5">
    <source>
    </source>
</evidence>
<evidence type="ECO:0000269" key="6">
    <source>
    </source>
</evidence>
<evidence type="ECO:0000269" key="7">
    <source>
    </source>
</evidence>
<evidence type="ECO:0000269" key="8">
    <source>
    </source>
</evidence>
<evidence type="ECO:0000269" key="9">
    <source>
    </source>
</evidence>
<evidence type="ECO:0000305" key="10"/>
<evidence type="ECO:0007829" key="11">
    <source>
        <dbReference type="PDB" id="2OR7"/>
    </source>
</evidence>
<accession>Q8R183</accession>
<accession>Q8VBW0</accession>